<feature type="chain" id="PRO_1000074269" description="tRNA sulfurtransferase">
    <location>
        <begin position="1"/>
        <end position="485"/>
    </location>
</feature>
<feature type="domain" description="THUMP" evidence="1">
    <location>
        <begin position="63"/>
        <end position="167"/>
    </location>
</feature>
<feature type="domain" description="Rhodanese" evidence="1">
    <location>
        <begin position="406"/>
        <end position="484"/>
    </location>
</feature>
<feature type="active site" description="Cysteine persulfide intermediate" evidence="1">
    <location>
        <position position="458"/>
    </location>
</feature>
<feature type="binding site" evidence="1">
    <location>
        <begin position="185"/>
        <end position="186"/>
    </location>
    <ligand>
        <name>ATP</name>
        <dbReference type="ChEBI" id="CHEBI:30616"/>
    </ligand>
</feature>
<feature type="binding site" evidence="1">
    <location>
        <position position="267"/>
    </location>
    <ligand>
        <name>ATP</name>
        <dbReference type="ChEBI" id="CHEBI:30616"/>
    </ligand>
</feature>
<feature type="binding site" evidence="1">
    <location>
        <position position="289"/>
    </location>
    <ligand>
        <name>ATP</name>
        <dbReference type="ChEBI" id="CHEBI:30616"/>
    </ligand>
</feature>
<feature type="binding site" evidence="1">
    <location>
        <position position="298"/>
    </location>
    <ligand>
        <name>ATP</name>
        <dbReference type="ChEBI" id="CHEBI:30616"/>
    </ligand>
</feature>
<feature type="disulfide bond" description="Redox-active" evidence="1">
    <location>
        <begin position="346"/>
        <end position="458"/>
    </location>
</feature>
<gene>
    <name evidence="1" type="primary">thiI</name>
    <name type="ordered locus">Shew_2766</name>
</gene>
<organism>
    <name type="scientific">Shewanella loihica (strain ATCC BAA-1088 / PV-4)</name>
    <dbReference type="NCBI Taxonomy" id="323850"/>
    <lineage>
        <taxon>Bacteria</taxon>
        <taxon>Pseudomonadati</taxon>
        <taxon>Pseudomonadota</taxon>
        <taxon>Gammaproteobacteria</taxon>
        <taxon>Alteromonadales</taxon>
        <taxon>Shewanellaceae</taxon>
        <taxon>Shewanella</taxon>
    </lineage>
</organism>
<accession>A3QGN4</accession>
<protein>
    <recommendedName>
        <fullName evidence="1">tRNA sulfurtransferase</fullName>
        <ecNumber evidence="1">2.8.1.4</ecNumber>
    </recommendedName>
    <alternativeName>
        <fullName evidence="1">Sulfur carrier protein ThiS sulfurtransferase</fullName>
    </alternativeName>
    <alternativeName>
        <fullName evidence="1">Thiamine biosynthesis protein ThiI</fullName>
    </alternativeName>
    <alternativeName>
        <fullName evidence="1">tRNA 4-thiouridine synthase</fullName>
    </alternativeName>
</protein>
<keyword id="KW-0067">ATP-binding</keyword>
<keyword id="KW-0963">Cytoplasm</keyword>
<keyword id="KW-1015">Disulfide bond</keyword>
<keyword id="KW-0547">Nucleotide-binding</keyword>
<keyword id="KW-0676">Redox-active center</keyword>
<keyword id="KW-1185">Reference proteome</keyword>
<keyword id="KW-0694">RNA-binding</keyword>
<keyword id="KW-0784">Thiamine biosynthesis</keyword>
<keyword id="KW-0808">Transferase</keyword>
<keyword id="KW-0820">tRNA-binding</keyword>
<dbReference type="EC" id="2.8.1.4" evidence="1"/>
<dbReference type="EMBL" id="CP000606">
    <property type="protein sequence ID" value="ABO24632.1"/>
    <property type="molecule type" value="Genomic_DNA"/>
</dbReference>
<dbReference type="RefSeq" id="WP_011866563.1">
    <property type="nucleotide sequence ID" value="NC_009092.1"/>
</dbReference>
<dbReference type="SMR" id="A3QGN4"/>
<dbReference type="STRING" id="323850.Shew_2766"/>
<dbReference type="KEGG" id="slo:Shew_2766"/>
<dbReference type="eggNOG" id="COG0301">
    <property type="taxonomic scope" value="Bacteria"/>
</dbReference>
<dbReference type="eggNOG" id="COG0607">
    <property type="taxonomic scope" value="Bacteria"/>
</dbReference>
<dbReference type="HOGENOM" id="CLU_037952_4_1_6"/>
<dbReference type="OrthoDB" id="9773948at2"/>
<dbReference type="UniPathway" id="UPA00060"/>
<dbReference type="Proteomes" id="UP000001558">
    <property type="component" value="Chromosome"/>
</dbReference>
<dbReference type="GO" id="GO:0005829">
    <property type="term" value="C:cytosol"/>
    <property type="evidence" value="ECO:0007669"/>
    <property type="project" value="TreeGrafter"/>
</dbReference>
<dbReference type="GO" id="GO:0005524">
    <property type="term" value="F:ATP binding"/>
    <property type="evidence" value="ECO:0007669"/>
    <property type="project" value="UniProtKB-UniRule"/>
</dbReference>
<dbReference type="GO" id="GO:0004810">
    <property type="term" value="F:CCA tRNA nucleotidyltransferase activity"/>
    <property type="evidence" value="ECO:0007669"/>
    <property type="project" value="InterPro"/>
</dbReference>
<dbReference type="GO" id="GO:0000049">
    <property type="term" value="F:tRNA binding"/>
    <property type="evidence" value="ECO:0007669"/>
    <property type="project" value="UniProtKB-UniRule"/>
</dbReference>
<dbReference type="GO" id="GO:0140741">
    <property type="term" value="F:tRNA-uracil-4 sulfurtransferase activity"/>
    <property type="evidence" value="ECO:0007669"/>
    <property type="project" value="UniProtKB-EC"/>
</dbReference>
<dbReference type="GO" id="GO:0009228">
    <property type="term" value="P:thiamine biosynthetic process"/>
    <property type="evidence" value="ECO:0007669"/>
    <property type="project" value="UniProtKB-KW"/>
</dbReference>
<dbReference type="GO" id="GO:0009229">
    <property type="term" value="P:thiamine diphosphate biosynthetic process"/>
    <property type="evidence" value="ECO:0007669"/>
    <property type="project" value="UniProtKB-UniRule"/>
</dbReference>
<dbReference type="GO" id="GO:0052837">
    <property type="term" value="P:thiazole biosynthetic process"/>
    <property type="evidence" value="ECO:0007669"/>
    <property type="project" value="InterPro"/>
</dbReference>
<dbReference type="GO" id="GO:0002937">
    <property type="term" value="P:tRNA 4-thiouridine biosynthesis"/>
    <property type="evidence" value="ECO:0007669"/>
    <property type="project" value="TreeGrafter"/>
</dbReference>
<dbReference type="CDD" id="cd01712">
    <property type="entry name" value="PPase_ThiI"/>
    <property type="match status" value="1"/>
</dbReference>
<dbReference type="CDD" id="cd00158">
    <property type="entry name" value="RHOD"/>
    <property type="match status" value="1"/>
</dbReference>
<dbReference type="CDD" id="cd11716">
    <property type="entry name" value="THUMP_ThiI"/>
    <property type="match status" value="1"/>
</dbReference>
<dbReference type="FunFam" id="3.40.50.620:FF:000029">
    <property type="entry name" value="tRNA sulfurtransferase"/>
    <property type="match status" value="1"/>
</dbReference>
<dbReference type="Gene3D" id="3.30.2130.30">
    <property type="match status" value="1"/>
</dbReference>
<dbReference type="Gene3D" id="3.40.50.620">
    <property type="entry name" value="HUPs"/>
    <property type="match status" value="1"/>
</dbReference>
<dbReference type="Gene3D" id="3.40.250.10">
    <property type="entry name" value="Rhodanese-like domain"/>
    <property type="match status" value="1"/>
</dbReference>
<dbReference type="HAMAP" id="MF_00021">
    <property type="entry name" value="ThiI"/>
    <property type="match status" value="1"/>
</dbReference>
<dbReference type="InterPro" id="IPR001763">
    <property type="entry name" value="Rhodanese-like_dom"/>
</dbReference>
<dbReference type="InterPro" id="IPR036873">
    <property type="entry name" value="Rhodanese-like_dom_sf"/>
</dbReference>
<dbReference type="InterPro" id="IPR014729">
    <property type="entry name" value="Rossmann-like_a/b/a_fold"/>
</dbReference>
<dbReference type="InterPro" id="IPR020536">
    <property type="entry name" value="ThiI_AANH"/>
</dbReference>
<dbReference type="InterPro" id="IPR054173">
    <property type="entry name" value="ThiI_fer"/>
</dbReference>
<dbReference type="InterPro" id="IPR049961">
    <property type="entry name" value="ThiI_N"/>
</dbReference>
<dbReference type="InterPro" id="IPR026340">
    <property type="entry name" value="THII_Thiazole_biosynth_dom"/>
</dbReference>
<dbReference type="InterPro" id="IPR004114">
    <property type="entry name" value="THUMP_dom"/>
</dbReference>
<dbReference type="InterPro" id="IPR049962">
    <property type="entry name" value="THUMP_ThiI"/>
</dbReference>
<dbReference type="InterPro" id="IPR003720">
    <property type="entry name" value="tRNA_STrfase"/>
</dbReference>
<dbReference type="InterPro" id="IPR050102">
    <property type="entry name" value="tRNA_sulfurtransferase_ThiI"/>
</dbReference>
<dbReference type="NCBIfam" id="TIGR04271">
    <property type="entry name" value="ThiI_C_thiazole"/>
    <property type="match status" value="1"/>
</dbReference>
<dbReference type="NCBIfam" id="TIGR00342">
    <property type="entry name" value="tRNA uracil 4-sulfurtransferase ThiI"/>
    <property type="match status" value="1"/>
</dbReference>
<dbReference type="PANTHER" id="PTHR43209">
    <property type="entry name" value="TRNA SULFURTRANSFERASE"/>
    <property type="match status" value="1"/>
</dbReference>
<dbReference type="PANTHER" id="PTHR43209:SF1">
    <property type="entry name" value="TRNA SULFURTRANSFERASE"/>
    <property type="match status" value="1"/>
</dbReference>
<dbReference type="Pfam" id="PF00581">
    <property type="entry name" value="Rhodanese"/>
    <property type="match status" value="1"/>
</dbReference>
<dbReference type="Pfam" id="PF02568">
    <property type="entry name" value="ThiI"/>
    <property type="match status" value="1"/>
</dbReference>
<dbReference type="Pfam" id="PF22025">
    <property type="entry name" value="ThiI_fer"/>
    <property type="match status" value="1"/>
</dbReference>
<dbReference type="Pfam" id="PF02926">
    <property type="entry name" value="THUMP"/>
    <property type="match status" value="1"/>
</dbReference>
<dbReference type="SMART" id="SM00981">
    <property type="entry name" value="THUMP"/>
    <property type="match status" value="1"/>
</dbReference>
<dbReference type="SUPFAM" id="SSF52402">
    <property type="entry name" value="Adenine nucleotide alpha hydrolases-like"/>
    <property type="match status" value="1"/>
</dbReference>
<dbReference type="SUPFAM" id="SSF52821">
    <property type="entry name" value="Rhodanese/Cell cycle control phosphatase"/>
    <property type="match status" value="1"/>
</dbReference>
<dbReference type="SUPFAM" id="SSF143437">
    <property type="entry name" value="THUMP domain-like"/>
    <property type="match status" value="1"/>
</dbReference>
<dbReference type="PROSITE" id="PS50206">
    <property type="entry name" value="RHODANESE_3"/>
    <property type="match status" value="1"/>
</dbReference>
<dbReference type="PROSITE" id="PS51165">
    <property type="entry name" value="THUMP"/>
    <property type="match status" value="1"/>
</dbReference>
<sequence length="485" mass="55105">MKFIVKLFPEIMMKSKPVRMRFTKMLETNIRNVLRKVDEEARVQRQWDKIMVRVPEDKPEMIERYAERLACIPGIAHVLQVRESTFESVDDIYQQTLALYKEELAGKTFCVRVKRSGKHEFNSIEVERYVGGGLNQFTEAAGVRLKNPDMTVNLEIDNEHLYLVEKRIDGLGGFPMATQEDVLSLISGGFDSGVSSFQFIKRGSRTHYCFFNLGGDQHEIGVKQVAYHLWQKYGESHKVKFISVPFDPVVQEILEKIDNGQMGVILKRMMMRAASRIAEKMGIQALVTGEAMGQVSSQTLTNLNVIDRSTDMLILRPLIVMDKQDIINMSREIGTEDFAKSIPEYCGVISQKPTVKAVMGKILAEEEKFSEDLIDRVVEAAEVIDIRDIAVSMDTKITETETVDAVSGGEVVVDIRSPEEEEQSPLSLNGIEVKCIPFFKLATQFADLDKEKTYLLYCDRGVMSKLQALYLQEQGYHNVKVYRPA</sequence>
<proteinExistence type="inferred from homology"/>
<evidence type="ECO:0000255" key="1">
    <source>
        <dbReference type="HAMAP-Rule" id="MF_00021"/>
    </source>
</evidence>
<comment type="function">
    <text evidence="1">Catalyzes the ATP-dependent transfer of a sulfur to tRNA to produce 4-thiouridine in position 8 of tRNAs, which functions as a near-UV photosensor. Also catalyzes the transfer of sulfur to the sulfur carrier protein ThiS, forming ThiS-thiocarboxylate. This is a step in the synthesis of thiazole, in the thiamine biosynthesis pathway. The sulfur is donated as persulfide by IscS.</text>
</comment>
<comment type="catalytic activity">
    <reaction evidence="1">
        <text>[ThiI sulfur-carrier protein]-S-sulfanyl-L-cysteine + a uridine in tRNA + 2 reduced [2Fe-2S]-[ferredoxin] + ATP + H(+) = [ThiI sulfur-carrier protein]-L-cysteine + a 4-thiouridine in tRNA + 2 oxidized [2Fe-2S]-[ferredoxin] + AMP + diphosphate</text>
        <dbReference type="Rhea" id="RHEA:24176"/>
        <dbReference type="Rhea" id="RHEA-COMP:10000"/>
        <dbReference type="Rhea" id="RHEA-COMP:10001"/>
        <dbReference type="Rhea" id="RHEA-COMP:13337"/>
        <dbReference type="Rhea" id="RHEA-COMP:13338"/>
        <dbReference type="Rhea" id="RHEA-COMP:13339"/>
        <dbReference type="Rhea" id="RHEA-COMP:13340"/>
        <dbReference type="ChEBI" id="CHEBI:15378"/>
        <dbReference type="ChEBI" id="CHEBI:29950"/>
        <dbReference type="ChEBI" id="CHEBI:30616"/>
        <dbReference type="ChEBI" id="CHEBI:33019"/>
        <dbReference type="ChEBI" id="CHEBI:33737"/>
        <dbReference type="ChEBI" id="CHEBI:33738"/>
        <dbReference type="ChEBI" id="CHEBI:61963"/>
        <dbReference type="ChEBI" id="CHEBI:65315"/>
        <dbReference type="ChEBI" id="CHEBI:136798"/>
        <dbReference type="ChEBI" id="CHEBI:456215"/>
        <dbReference type="EC" id="2.8.1.4"/>
    </reaction>
</comment>
<comment type="catalytic activity">
    <reaction evidence="1">
        <text>[ThiS sulfur-carrier protein]-C-terminal Gly-Gly-AMP + S-sulfanyl-L-cysteinyl-[cysteine desulfurase] + AH2 = [ThiS sulfur-carrier protein]-C-terminal-Gly-aminoethanethioate + L-cysteinyl-[cysteine desulfurase] + A + AMP + 2 H(+)</text>
        <dbReference type="Rhea" id="RHEA:43340"/>
        <dbReference type="Rhea" id="RHEA-COMP:12157"/>
        <dbReference type="Rhea" id="RHEA-COMP:12158"/>
        <dbReference type="Rhea" id="RHEA-COMP:12910"/>
        <dbReference type="Rhea" id="RHEA-COMP:19908"/>
        <dbReference type="ChEBI" id="CHEBI:13193"/>
        <dbReference type="ChEBI" id="CHEBI:15378"/>
        <dbReference type="ChEBI" id="CHEBI:17499"/>
        <dbReference type="ChEBI" id="CHEBI:29950"/>
        <dbReference type="ChEBI" id="CHEBI:61963"/>
        <dbReference type="ChEBI" id="CHEBI:90618"/>
        <dbReference type="ChEBI" id="CHEBI:232372"/>
        <dbReference type="ChEBI" id="CHEBI:456215"/>
    </reaction>
</comment>
<comment type="pathway">
    <text evidence="1">Cofactor biosynthesis; thiamine diphosphate biosynthesis.</text>
</comment>
<comment type="subcellular location">
    <subcellularLocation>
        <location evidence="1">Cytoplasm</location>
    </subcellularLocation>
</comment>
<comment type="similarity">
    <text evidence="1">Belongs to the ThiI family.</text>
</comment>
<reference key="1">
    <citation type="submission" date="2007-03" db="EMBL/GenBank/DDBJ databases">
        <title>Complete sequence of Shewanella loihica PV-4.</title>
        <authorList>
            <consortium name="US DOE Joint Genome Institute"/>
            <person name="Copeland A."/>
            <person name="Lucas S."/>
            <person name="Lapidus A."/>
            <person name="Barry K."/>
            <person name="Detter J.C."/>
            <person name="Glavina del Rio T."/>
            <person name="Hammon N."/>
            <person name="Israni S."/>
            <person name="Dalin E."/>
            <person name="Tice H."/>
            <person name="Pitluck S."/>
            <person name="Chain P."/>
            <person name="Malfatti S."/>
            <person name="Shin M."/>
            <person name="Vergez L."/>
            <person name="Schmutz J."/>
            <person name="Larimer F."/>
            <person name="Land M."/>
            <person name="Hauser L."/>
            <person name="Kyrpides N."/>
            <person name="Mikhailova N."/>
            <person name="Romine M.F."/>
            <person name="Serres G."/>
            <person name="Fredrickson J."/>
            <person name="Tiedje J."/>
            <person name="Richardson P."/>
        </authorList>
    </citation>
    <scope>NUCLEOTIDE SEQUENCE [LARGE SCALE GENOMIC DNA]</scope>
    <source>
        <strain>ATCC BAA-1088 / PV-4</strain>
    </source>
</reference>
<name>THII_SHELP</name>